<dbReference type="EC" id="6.1.1.22" evidence="1"/>
<dbReference type="EMBL" id="AE017355">
    <property type="protein sequence ID" value="AAT63894.1"/>
    <property type="molecule type" value="Genomic_DNA"/>
</dbReference>
<dbReference type="RefSeq" id="WP_000432161.1">
    <property type="nucleotide sequence ID" value="NC_005957.1"/>
</dbReference>
<dbReference type="RefSeq" id="YP_038607.1">
    <property type="nucleotide sequence ID" value="NC_005957.1"/>
</dbReference>
<dbReference type="SMR" id="Q6HCW9"/>
<dbReference type="KEGG" id="btk:BT9727_4292"/>
<dbReference type="PATRIC" id="fig|281309.8.peg.4575"/>
<dbReference type="HOGENOM" id="CLU_004553_2_0_9"/>
<dbReference type="Proteomes" id="UP000001301">
    <property type="component" value="Chromosome"/>
</dbReference>
<dbReference type="GO" id="GO:0005737">
    <property type="term" value="C:cytoplasm"/>
    <property type="evidence" value="ECO:0007669"/>
    <property type="project" value="UniProtKB-SubCell"/>
</dbReference>
<dbReference type="GO" id="GO:0004816">
    <property type="term" value="F:asparagine-tRNA ligase activity"/>
    <property type="evidence" value="ECO:0007669"/>
    <property type="project" value="UniProtKB-UniRule"/>
</dbReference>
<dbReference type="GO" id="GO:0005524">
    <property type="term" value="F:ATP binding"/>
    <property type="evidence" value="ECO:0007669"/>
    <property type="project" value="UniProtKB-UniRule"/>
</dbReference>
<dbReference type="GO" id="GO:0140096">
    <property type="term" value="F:catalytic activity, acting on a protein"/>
    <property type="evidence" value="ECO:0007669"/>
    <property type="project" value="UniProtKB-ARBA"/>
</dbReference>
<dbReference type="GO" id="GO:0003676">
    <property type="term" value="F:nucleic acid binding"/>
    <property type="evidence" value="ECO:0007669"/>
    <property type="project" value="InterPro"/>
</dbReference>
<dbReference type="GO" id="GO:0016740">
    <property type="term" value="F:transferase activity"/>
    <property type="evidence" value="ECO:0007669"/>
    <property type="project" value="UniProtKB-ARBA"/>
</dbReference>
<dbReference type="GO" id="GO:0006421">
    <property type="term" value="P:asparaginyl-tRNA aminoacylation"/>
    <property type="evidence" value="ECO:0007669"/>
    <property type="project" value="UniProtKB-UniRule"/>
</dbReference>
<dbReference type="CDD" id="cd00776">
    <property type="entry name" value="AsxRS_core"/>
    <property type="match status" value="1"/>
</dbReference>
<dbReference type="CDD" id="cd04318">
    <property type="entry name" value="EcAsnRS_like_N"/>
    <property type="match status" value="1"/>
</dbReference>
<dbReference type="FunFam" id="3.30.930.10:FF:000016">
    <property type="entry name" value="Asparagine--tRNA ligase"/>
    <property type="match status" value="1"/>
</dbReference>
<dbReference type="Gene3D" id="3.30.930.10">
    <property type="entry name" value="Bira Bifunctional Protein, Domain 2"/>
    <property type="match status" value="1"/>
</dbReference>
<dbReference type="Gene3D" id="2.40.50.140">
    <property type="entry name" value="Nucleic acid-binding proteins"/>
    <property type="match status" value="1"/>
</dbReference>
<dbReference type="HAMAP" id="MF_00534">
    <property type="entry name" value="Asn_tRNA_synth"/>
    <property type="match status" value="1"/>
</dbReference>
<dbReference type="InterPro" id="IPR004364">
    <property type="entry name" value="Aa-tRNA-synt_II"/>
</dbReference>
<dbReference type="InterPro" id="IPR006195">
    <property type="entry name" value="aa-tRNA-synth_II"/>
</dbReference>
<dbReference type="InterPro" id="IPR045864">
    <property type="entry name" value="aa-tRNA-synth_II/BPL/LPL"/>
</dbReference>
<dbReference type="InterPro" id="IPR004522">
    <property type="entry name" value="Asn-tRNA-ligase"/>
</dbReference>
<dbReference type="InterPro" id="IPR002312">
    <property type="entry name" value="Asp/Asn-tRNA-synth_IIb"/>
</dbReference>
<dbReference type="InterPro" id="IPR012340">
    <property type="entry name" value="NA-bd_OB-fold"/>
</dbReference>
<dbReference type="InterPro" id="IPR004365">
    <property type="entry name" value="NA-bd_OB_tRNA"/>
</dbReference>
<dbReference type="NCBIfam" id="TIGR00457">
    <property type="entry name" value="asnS"/>
    <property type="match status" value="1"/>
</dbReference>
<dbReference type="NCBIfam" id="NF003037">
    <property type="entry name" value="PRK03932.1"/>
    <property type="match status" value="1"/>
</dbReference>
<dbReference type="PANTHER" id="PTHR22594:SF34">
    <property type="entry name" value="ASPARAGINE--TRNA LIGASE, MITOCHONDRIAL-RELATED"/>
    <property type="match status" value="1"/>
</dbReference>
<dbReference type="PANTHER" id="PTHR22594">
    <property type="entry name" value="ASPARTYL/LYSYL-TRNA SYNTHETASE"/>
    <property type="match status" value="1"/>
</dbReference>
<dbReference type="Pfam" id="PF00152">
    <property type="entry name" value="tRNA-synt_2"/>
    <property type="match status" value="1"/>
</dbReference>
<dbReference type="Pfam" id="PF01336">
    <property type="entry name" value="tRNA_anti-codon"/>
    <property type="match status" value="1"/>
</dbReference>
<dbReference type="PRINTS" id="PR01042">
    <property type="entry name" value="TRNASYNTHASP"/>
</dbReference>
<dbReference type="SUPFAM" id="SSF55681">
    <property type="entry name" value="Class II aaRS and biotin synthetases"/>
    <property type="match status" value="1"/>
</dbReference>
<dbReference type="SUPFAM" id="SSF50249">
    <property type="entry name" value="Nucleic acid-binding proteins"/>
    <property type="match status" value="1"/>
</dbReference>
<dbReference type="PROSITE" id="PS50862">
    <property type="entry name" value="AA_TRNA_LIGASE_II"/>
    <property type="match status" value="1"/>
</dbReference>
<sequence>MENTLVKSLYRDTDKYAGQTVQVSGWIRNLRDSKAFGFIELNDGSFFKSVQIVFDTELDNFKEIAKLPLSSSVKVEGKVIATPGAKQPFEIKAEKIDIEGLSDSDYPLQKKRHTFEYLRTIAHLRPRTNAFSATFRVRSIAAFAIHQFFQERGFVHVHTPIITGSDTEGAGEMFRVTTQDLNNVPKDEDGQVDESKDFFGKETNLTVSGQLNAEAYALAFRDVYTFGPTFRAENSNTTRHAAEFWMVEPEIAFAELGDVMNLTEDMLKYAMKYVLEHAPEEMEFFNSFVDKTVLERMNNVINSDFGRITYTEAIKVLQESGADFKYPVEWGIDLQTEHERYLSEEIFKRPVFVTDYPKDIKAFYMRLNDDGKTVAATDLLVPGIGELIGGSQREERMDVLVDRIKELGMNEEDYWWYLELRKYGGTKHAGFGLGFERFLMYITGMANIRDVIPFPRTPGSSEF</sequence>
<reference key="1">
    <citation type="journal article" date="2006" name="J. Bacteriol.">
        <title>Pathogenomic sequence analysis of Bacillus cereus and Bacillus thuringiensis isolates closely related to Bacillus anthracis.</title>
        <authorList>
            <person name="Han C.S."/>
            <person name="Xie G."/>
            <person name="Challacombe J.F."/>
            <person name="Altherr M.R."/>
            <person name="Bhotika S.S."/>
            <person name="Bruce D."/>
            <person name="Campbell C.S."/>
            <person name="Campbell M.L."/>
            <person name="Chen J."/>
            <person name="Chertkov O."/>
            <person name="Cleland C."/>
            <person name="Dimitrijevic M."/>
            <person name="Doggett N.A."/>
            <person name="Fawcett J.J."/>
            <person name="Glavina T."/>
            <person name="Goodwin L.A."/>
            <person name="Hill K.K."/>
            <person name="Hitchcock P."/>
            <person name="Jackson P.J."/>
            <person name="Keim P."/>
            <person name="Kewalramani A.R."/>
            <person name="Longmire J."/>
            <person name="Lucas S."/>
            <person name="Malfatti S."/>
            <person name="McMurry K."/>
            <person name="Meincke L.J."/>
            <person name="Misra M."/>
            <person name="Moseman B.L."/>
            <person name="Mundt M."/>
            <person name="Munk A.C."/>
            <person name="Okinaka R.T."/>
            <person name="Parson-Quintana B."/>
            <person name="Reilly L.P."/>
            <person name="Richardson P."/>
            <person name="Robinson D.L."/>
            <person name="Rubin E."/>
            <person name="Saunders E."/>
            <person name="Tapia R."/>
            <person name="Tesmer J.G."/>
            <person name="Thayer N."/>
            <person name="Thompson L.S."/>
            <person name="Tice H."/>
            <person name="Ticknor L.O."/>
            <person name="Wills P.L."/>
            <person name="Brettin T.S."/>
            <person name="Gilna P."/>
        </authorList>
    </citation>
    <scope>NUCLEOTIDE SEQUENCE [LARGE SCALE GENOMIC DNA]</scope>
    <source>
        <strain>97-27</strain>
    </source>
</reference>
<protein>
    <recommendedName>
        <fullName evidence="1">Asparagine--tRNA ligase</fullName>
        <ecNumber evidence="1">6.1.1.22</ecNumber>
    </recommendedName>
    <alternativeName>
        <fullName evidence="1">Asparaginyl-tRNA synthetase</fullName>
        <shortName evidence="1">AsnRS</shortName>
    </alternativeName>
</protein>
<evidence type="ECO:0000255" key="1">
    <source>
        <dbReference type="HAMAP-Rule" id="MF_00534"/>
    </source>
</evidence>
<comment type="catalytic activity">
    <reaction evidence="1">
        <text>tRNA(Asn) + L-asparagine + ATP = L-asparaginyl-tRNA(Asn) + AMP + diphosphate + H(+)</text>
        <dbReference type="Rhea" id="RHEA:11180"/>
        <dbReference type="Rhea" id="RHEA-COMP:9659"/>
        <dbReference type="Rhea" id="RHEA-COMP:9674"/>
        <dbReference type="ChEBI" id="CHEBI:15378"/>
        <dbReference type="ChEBI" id="CHEBI:30616"/>
        <dbReference type="ChEBI" id="CHEBI:33019"/>
        <dbReference type="ChEBI" id="CHEBI:58048"/>
        <dbReference type="ChEBI" id="CHEBI:78442"/>
        <dbReference type="ChEBI" id="CHEBI:78515"/>
        <dbReference type="ChEBI" id="CHEBI:456215"/>
        <dbReference type="EC" id="6.1.1.22"/>
    </reaction>
</comment>
<comment type="subunit">
    <text evidence="1">Homodimer.</text>
</comment>
<comment type="subcellular location">
    <subcellularLocation>
        <location evidence="1">Cytoplasm</location>
    </subcellularLocation>
</comment>
<comment type="similarity">
    <text evidence="1">Belongs to the class-II aminoacyl-tRNA synthetase family.</text>
</comment>
<organism>
    <name type="scientific">Bacillus thuringiensis subsp. konkukian (strain 97-27)</name>
    <dbReference type="NCBI Taxonomy" id="281309"/>
    <lineage>
        <taxon>Bacteria</taxon>
        <taxon>Bacillati</taxon>
        <taxon>Bacillota</taxon>
        <taxon>Bacilli</taxon>
        <taxon>Bacillales</taxon>
        <taxon>Bacillaceae</taxon>
        <taxon>Bacillus</taxon>
        <taxon>Bacillus cereus group</taxon>
    </lineage>
</organism>
<proteinExistence type="inferred from homology"/>
<keyword id="KW-0030">Aminoacyl-tRNA synthetase</keyword>
<keyword id="KW-0067">ATP-binding</keyword>
<keyword id="KW-0963">Cytoplasm</keyword>
<keyword id="KW-0436">Ligase</keyword>
<keyword id="KW-0547">Nucleotide-binding</keyword>
<keyword id="KW-0648">Protein biosynthesis</keyword>
<accession>Q6HCW9</accession>
<feature type="chain" id="PRO_0000176391" description="Asparagine--tRNA ligase">
    <location>
        <begin position="1"/>
        <end position="463"/>
    </location>
</feature>
<gene>
    <name evidence="1" type="primary">asnS</name>
    <name type="ordered locus">BT9727_4292</name>
</gene>
<name>SYN_BACHK</name>